<evidence type="ECO:0000255" key="1">
    <source>
        <dbReference type="HAMAP-Rule" id="MF_00067"/>
    </source>
</evidence>
<proteinExistence type="inferred from homology"/>
<sequence>MKSAIIKEFLAHQETIAKVIETMQEPLEKASKIAVETLKNGNKILLCGNGGSAADAQHFAAELTGRYKTERRGLPGIALTTDTSALTAIGNDYGYDRVFDRQVEALASKGDLLIGISTSGNSTNVINALKVARDLGCKTIGLTGRDGGKMNELCDINLVVPSNDTPRIQEMHILFEHTICQIIDNELSH</sequence>
<gene>
    <name evidence="1" type="primary">gmhA</name>
    <name type="ordered locus">Abu_1798</name>
</gene>
<protein>
    <recommendedName>
        <fullName evidence="1">Phosphoheptose isomerase</fullName>
        <ecNumber evidence="1">5.3.1.28</ecNumber>
    </recommendedName>
    <alternativeName>
        <fullName evidence="1">Sedoheptulose 7-phosphate isomerase</fullName>
    </alternativeName>
</protein>
<accession>A8EVR5</accession>
<organism>
    <name type="scientific">Aliarcobacter butzleri (strain RM4018)</name>
    <name type="common">Arcobacter butzleri</name>
    <dbReference type="NCBI Taxonomy" id="367737"/>
    <lineage>
        <taxon>Bacteria</taxon>
        <taxon>Pseudomonadati</taxon>
        <taxon>Campylobacterota</taxon>
        <taxon>Epsilonproteobacteria</taxon>
        <taxon>Campylobacterales</taxon>
        <taxon>Arcobacteraceae</taxon>
        <taxon>Aliarcobacter</taxon>
    </lineage>
</organism>
<keyword id="KW-0119">Carbohydrate metabolism</keyword>
<keyword id="KW-0963">Cytoplasm</keyword>
<keyword id="KW-0413">Isomerase</keyword>
<keyword id="KW-0479">Metal-binding</keyword>
<keyword id="KW-1185">Reference proteome</keyword>
<keyword id="KW-0862">Zinc</keyword>
<dbReference type="EC" id="5.3.1.28" evidence="1"/>
<dbReference type="EMBL" id="CP000361">
    <property type="protein sequence ID" value="ABV68038.1"/>
    <property type="molecule type" value="Genomic_DNA"/>
</dbReference>
<dbReference type="RefSeq" id="WP_012147754.1">
    <property type="nucleotide sequence ID" value="NC_009850.1"/>
</dbReference>
<dbReference type="SMR" id="A8EVR5"/>
<dbReference type="STRING" id="367737.Abu_1798"/>
<dbReference type="GeneID" id="24305012"/>
<dbReference type="KEGG" id="abu:Abu_1798"/>
<dbReference type="eggNOG" id="COG0279">
    <property type="taxonomic scope" value="Bacteria"/>
</dbReference>
<dbReference type="HOGENOM" id="CLU_080999_4_0_7"/>
<dbReference type="UniPathway" id="UPA00041">
    <property type="reaction ID" value="UER00436"/>
</dbReference>
<dbReference type="Proteomes" id="UP000001136">
    <property type="component" value="Chromosome"/>
</dbReference>
<dbReference type="GO" id="GO:0005737">
    <property type="term" value="C:cytoplasm"/>
    <property type="evidence" value="ECO:0007669"/>
    <property type="project" value="UniProtKB-SubCell"/>
</dbReference>
<dbReference type="GO" id="GO:0097367">
    <property type="term" value="F:carbohydrate derivative binding"/>
    <property type="evidence" value="ECO:0007669"/>
    <property type="project" value="InterPro"/>
</dbReference>
<dbReference type="GO" id="GO:0008968">
    <property type="term" value="F:D-sedoheptulose 7-phosphate isomerase activity"/>
    <property type="evidence" value="ECO:0007669"/>
    <property type="project" value="UniProtKB-UniRule"/>
</dbReference>
<dbReference type="GO" id="GO:0008270">
    <property type="term" value="F:zinc ion binding"/>
    <property type="evidence" value="ECO:0007669"/>
    <property type="project" value="UniProtKB-UniRule"/>
</dbReference>
<dbReference type="GO" id="GO:0005975">
    <property type="term" value="P:carbohydrate metabolic process"/>
    <property type="evidence" value="ECO:0007669"/>
    <property type="project" value="UniProtKB-UniRule"/>
</dbReference>
<dbReference type="GO" id="GO:2001061">
    <property type="term" value="P:D-glycero-D-manno-heptose 7-phosphate biosynthetic process"/>
    <property type="evidence" value="ECO:0007669"/>
    <property type="project" value="UniProtKB-UniPathway"/>
</dbReference>
<dbReference type="CDD" id="cd05006">
    <property type="entry name" value="SIS_GmhA"/>
    <property type="match status" value="1"/>
</dbReference>
<dbReference type="Gene3D" id="3.40.50.10490">
    <property type="entry name" value="Glucose-6-phosphate isomerase like protein, domain 1"/>
    <property type="match status" value="1"/>
</dbReference>
<dbReference type="HAMAP" id="MF_00067">
    <property type="entry name" value="GmhA"/>
    <property type="match status" value="1"/>
</dbReference>
<dbReference type="InterPro" id="IPR035461">
    <property type="entry name" value="GmhA/DiaA"/>
</dbReference>
<dbReference type="InterPro" id="IPR004515">
    <property type="entry name" value="Phosphoheptose_Isoase"/>
</dbReference>
<dbReference type="InterPro" id="IPR001347">
    <property type="entry name" value="SIS_dom"/>
</dbReference>
<dbReference type="InterPro" id="IPR046348">
    <property type="entry name" value="SIS_dom_sf"/>
</dbReference>
<dbReference type="InterPro" id="IPR050099">
    <property type="entry name" value="SIS_GmhA/DiaA_subfam"/>
</dbReference>
<dbReference type="NCBIfam" id="TIGR00441">
    <property type="entry name" value="gmhA"/>
    <property type="match status" value="1"/>
</dbReference>
<dbReference type="PANTHER" id="PTHR30390:SF6">
    <property type="entry name" value="DNAA INITIATOR-ASSOCIATING PROTEIN DIAA"/>
    <property type="match status" value="1"/>
</dbReference>
<dbReference type="PANTHER" id="PTHR30390">
    <property type="entry name" value="SEDOHEPTULOSE 7-PHOSPHATE ISOMERASE / DNAA INITIATOR-ASSOCIATING FACTOR FOR REPLICATION INITIATION"/>
    <property type="match status" value="1"/>
</dbReference>
<dbReference type="Pfam" id="PF13580">
    <property type="entry name" value="SIS_2"/>
    <property type="match status" value="1"/>
</dbReference>
<dbReference type="SUPFAM" id="SSF53697">
    <property type="entry name" value="SIS domain"/>
    <property type="match status" value="1"/>
</dbReference>
<dbReference type="PROSITE" id="PS51464">
    <property type="entry name" value="SIS"/>
    <property type="match status" value="1"/>
</dbReference>
<comment type="function">
    <text evidence="1">Catalyzes the isomerization of sedoheptulose 7-phosphate in D-glycero-D-manno-heptose 7-phosphate.</text>
</comment>
<comment type="catalytic activity">
    <reaction evidence="1">
        <text>2 D-sedoheptulose 7-phosphate = D-glycero-alpha-D-manno-heptose 7-phosphate + D-glycero-beta-D-manno-heptose 7-phosphate</text>
        <dbReference type="Rhea" id="RHEA:27489"/>
        <dbReference type="ChEBI" id="CHEBI:57483"/>
        <dbReference type="ChEBI" id="CHEBI:60203"/>
        <dbReference type="ChEBI" id="CHEBI:60204"/>
        <dbReference type="EC" id="5.3.1.28"/>
    </reaction>
</comment>
<comment type="cofactor">
    <cofactor evidence="1">
        <name>Zn(2+)</name>
        <dbReference type="ChEBI" id="CHEBI:29105"/>
    </cofactor>
    <text evidence="1">Binds 1 zinc ion per subunit.</text>
</comment>
<comment type="pathway">
    <text evidence="1">Carbohydrate biosynthesis; D-glycero-D-manno-heptose 7-phosphate biosynthesis; D-glycero-alpha-D-manno-heptose 7-phosphate and D-glycero-beta-D-manno-heptose 7-phosphate from sedoheptulose 7-phosphate: step 1/1.</text>
</comment>
<comment type="subunit">
    <text evidence="1">Homotetramer.</text>
</comment>
<comment type="subcellular location">
    <subcellularLocation>
        <location evidence="1">Cytoplasm</location>
    </subcellularLocation>
</comment>
<comment type="miscellaneous">
    <text evidence="1">The reaction produces a racemic mixture of D-glycero-alpha-D-manno-heptose 7-phosphate and D-glycero-beta-D-manno-heptose 7-phosphate.</text>
</comment>
<comment type="similarity">
    <text evidence="1">Belongs to the SIS family. GmhA subfamily.</text>
</comment>
<feature type="chain" id="PRO_1000057448" description="Phosphoheptose isomerase">
    <location>
        <begin position="1"/>
        <end position="189"/>
    </location>
</feature>
<feature type="domain" description="SIS" evidence="1">
    <location>
        <begin position="34"/>
        <end position="189"/>
    </location>
</feature>
<feature type="binding site" evidence="1">
    <location>
        <begin position="49"/>
        <end position="51"/>
    </location>
    <ligand>
        <name>substrate</name>
    </ligand>
</feature>
<feature type="binding site" evidence="1">
    <location>
        <position position="58"/>
    </location>
    <ligand>
        <name>Zn(2+)</name>
        <dbReference type="ChEBI" id="CHEBI:29105"/>
    </ligand>
</feature>
<feature type="binding site" evidence="1">
    <location>
        <position position="62"/>
    </location>
    <ligand>
        <name>substrate</name>
    </ligand>
</feature>
<feature type="binding site" evidence="1">
    <location>
        <position position="62"/>
    </location>
    <ligand>
        <name>Zn(2+)</name>
        <dbReference type="ChEBI" id="CHEBI:29105"/>
    </ligand>
</feature>
<feature type="binding site" evidence="1">
    <location>
        <begin position="91"/>
        <end position="92"/>
    </location>
    <ligand>
        <name>substrate</name>
    </ligand>
</feature>
<feature type="binding site" evidence="1">
    <location>
        <begin position="117"/>
        <end position="119"/>
    </location>
    <ligand>
        <name>substrate</name>
    </ligand>
</feature>
<feature type="binding site" evidence="1">
    <location>
        <position position="122"/>
    </location>
    <ligand>
        <name>substrate</name>
    </ligand>
</feature>
<feature type="binding site" evidence="1">
    <location>
        <position position="169"/>
    </location>
    <ligand>
        <name>substrate</name>
    </ligand>
</feature>
<feature type="binding site" evidence="1">
    <location>
        <position position="169"/>
    </location>
    <ligand>
        <name>Zn(2+)</name>
        <dbReference type="ChEBI" id="CHEBI:29105"/>
    </ligand>
</feature>
<feature type="binding site" evidence="1">
    <location>
        <position position="177"/>
    </location>
    <ligand>
        <name>Zn(2+)</name>
        <dbReference type="ChEBI" id="CHEBI:29105"/>
    </ligand>
</feature>
<reference key="1">
    <citation type="journal article" date="2007" name="PLoS ONE">
        <title>The complete genome sequence and analysis of the Epsilonproteobacterium Arcobacter butzleri.</title>
        <authorList>
            <person name="Miller W.G."/>
            <person name="Parker C.T."/>
            <person name="Rubenfield M."/>
            <person name="Mendz G.L."/>
            <person name="Woesten M.M.S.M."/>
            <person name="Ussery D.W."/>
            <person name="Stolz J.F."/>
            <person name="Binnewies T.T."/>
            <person name="Hallin P.F."/>
            <person name="Wang G."/>
            <person name="Malek J.A."/>
            <person name="Rogosin A."/>
            <person name="Stanker L.H."/>
            <person name="Mandrell R.E."/>
        </authorList>
    </citation>
    <scope>NUCLEOTIDE SEQUENCE [LARGE SCALE GENOMIC DNA]</scope>
    <source>
        <strain>RM4018</strain>
    </source>
</reference>
<name>GMHA_ALIB4</name>